<keyword id="KW-0963">Cytoplasm</keyword>
<keyword id="KW-0690">Ribosome biogenesis</keyword>
<accession>B0TQA1</accession>
<gene>
    <name evidence="1" type="primary">rbfA</name>
    <name type="ordered locus">Shal_3146</name>
</gene>
<name>RBFA_SHEHH</name>
<protein>
    <recommendedName>
        <fullName evidence="1">Ribosome-binding factor A</fullName>
    </recommendedName>
</protein>
<reference key="1">
    <citation type="submission" date="2008-01" db="EMBL/GenBank/DDBJ databases">
        <title>Complete sequence of Shewanella halifaxensis HAW-EB4.</title>
        <authorList>
            <consortium name="US DOE Joint Genome Institute"/>
            <person name="Copeland A."/>
            <person name="Lucas S."/>
            <person name="Lapidus A."/>
            <person name="Glavina del Rio T."/>
            <person name="Dalin E."/>
            <person name="Tice H."/>
            <person name="Bruce D."/>
            <person name="Goodwin L."/>
            <person name="Pitluck S."/>
            <person name="Sims D."/>
            <person name="Brettin T."/>
            <person name="Detter J.C."/>
            <person name="Han C."/>
            <person name="Kuske C.R."/>
            <person name="Schmutz J."/>
            <person name="Larimer F."/>
            <person name="Land M."/>
            <person name="Hauser L."/>
            <person name="Kyrpides N."/>
            <person name="Kim E."/>
            <person name="Zhao J.-S."/>
            <person name="Richardson P."/>
        </authorList>
    </citation>
    <scope>NUCLEOTIDE SEQUENCE [LARGE SCALE GENOMIC DNA]</scope>
    <source>
        <strain>HAW-EB4</strain>
    </source>
</reference>
<organism>
    <name type="scientific">Shewanella halifaxensis (strain HAW-EB4)</name>
    <dbReference type="NCBI Taxonomy" id="458817"/>
    <lineage>
        <taxon>Bacteria</taxon>
        <taxon>Pseudomonadati</taxon>
        <taxon>Pseudomonadota</taxon>
        <taxon>Gammaproteobacteria</taxon>
        <taxon>Alteromonadales</taxon>
        <taxon>Shewanellaceae</taxon>
        <taxon>Shewanella</taxon>
    </lineage>
</organism>
<sequence>MAKEFSRTRRIAQQLQQELAQVLQRDMKDPRIGFVTVNDVDVSRDLSYAKVYVTFFEEDEKLVEQKVAALDAAAGYIRSLVAGRMKLRVMPELRFIYDSSLVEGMRMSNLVSRVISNDEAKQKQHGVETDAEQGETKDEGDK</sequence>
<proteinExistence type="inferred from homology"/>
<comment type="function">
    <text evidence="1">One of several proteins that assist in the late maturation steps of the functional core of the 30S ribosomal subunit. Associates with free 30S ribosomal subunits (but not with 30S subunits that are part of 70S ribosomes or polysomes). Required for efficient processing of 16S rRNA. May interact with the 5'-terminal helix region of 16S rRNA.</text>
</comment>
<comment type="subunit">
    <text evidence="1">Monomer. Binds 30S ribosomal subunits, but not 50S ribosomal subunits or 70S ribosomes.</text>
</comment>
<comment type="subcellular location">
    <subcellularLocation>
        <location evidence="1">Cytoplasm</location>
    </subcellularLocation>
</comment>
<comment type="similarity">
    <text evidence="1">Belongs to the RbfA family.</text>
</comment>
<feature type="chain" id="PRO_1000073779" description="Ribosome-binding factor A">
    <location>
        <begin position="1"/>
        <end position="142"/>
    </location>
</feature>
<feature type="region of interest" description="Disordered" evidence="2">
    <location>
        <begin position="119"/>
        <end position="142"/>
    </location>
</feature>
<dbReference type="EMBL" id="CP000931">
    <property type="protein sequence ID" value="ABZ77693.1"/>
    <property type="molecule type" value="Genomic_DNA"/>
</dbReference>
<dbReference type="RefSeq" id="WP_012278217.1">
    <property type="nucleotide sequence ID" value="NC_010334.1"/>
</dbReference>
<dbReference type="SMR" id="B0TQA1"/>
<dbReference type="STRING" id="458817.Shal_3146"/>
<dbReference type="KEGG" id="shl:Shal_3146"/>
<dbReference type="eggNOG" id="COG0858">
    <property type="taxonomic scope" value="Bacteria"/>
</dbReference>
<dbReference type="HOGENOM" id="CLU_089475_5_0_6"/>
<dbReference type="OrthoDB" id="307788at2"/>
<dbReference type="Proteomes" id="UP000001317">
    <property type="component" value="Chromosome"/>
</dbReference>
<dbReference type="GO" id="GO:0005829">
    <property type="term" value="C:cytosol"/>
    <property type="evidence" value="ECO:0007669"/>
    <property type="project" value="TreeGrafter"/>
</dbReference>
<dbReference type="GO" id="GO:0043024">
    <property type="term" value="F:ribosomal small subunit binding"/>
    <property type="evidence" value="ECO:0007669"/>
    <property type="project" value="TreeGrafter"/>
</dbReference>
<dbReference type="GO" id="GO:0030490">
    <property type="term" value="P:maturation of SSU-rRNA"/>
    <property type="evidence" value="ECO:0007669"/>
    <property type="project" value="UniProtKB-UniRule"/>
</dbReference>
<dbReference type="FunFam" id="3.30.300.20:FF:000007">
    <property type="entry name" value="Ribosome-binding factor A"/>
    <property type="match status" value="1"/>
</dbReference>
<dbReference type="Gene3D" id="3.30.300.20">
    <property type="match status" value="1"/>
</dbReference>
<dbReference type="HAMAP" id="MF_00003">
    <property type="entry name" value="RbfA"/>
    <property type="match status" value="1"/>
</dbReference>
<dbReference type="InterPro" id="IPR015946">
    <property type="entry name" value="KH_dom-like_a/b"/>
</dbReference>
<dbReference type="InterPro" id="IPR000238">
    <property type="entry name" value="RbfA"/>
</dbReference>
<dbReference type="InterPro" id="IPR023799">
    <property type="entry name" value="RbfA_dom_sf"/>
</dbReference>
<dbReference type="InterPro" id="IPR020053">
    <property type="entry name" value="Ribosome-bd_factorA_CS"/>
</dbReference>
<dbReference type="NCBIfam" id="TIGR00082">
    <property type="entry name" value="rbfA"/>
    <property type="match status" value="1"/>
</dbReference>
<dbReference type="PANTHER" id="PTHR33515">
    <property type="entry name" value="RIBOSOME-BINDING FACTOR A, CHLOROPLASTIC-RELATED"/>
    <property type="match status" value="1"/>
</dbReference>
<dbReference type="PANTHER" id="PTHR33515:SF1">
    <property type="entry name" value="RIBOSOME-BINDING FACTOR A, CHLOROPLASTIC-RELATED"/>
    <property type="match status" value="1"/>
</dbReference>
<dbReference type="Pfam" id="PF02033">
    <property type="entry name" value="RBFA"/>
    <property type="match status" value="1"/>
</dbReference>
<dbReference type="SUPFAM" id="SSF89919">
    <property type="entry name" value="Ribosome-binding factor A, RbfA"/>
    <property type="match status" value="1"/>
</dbReference>
<dbReference type="PROSITE" id="PS01319">
    <property type="entry name" value="RBFA"/>
    <property type="match status" value="1"/>
</dbReference>
<evidence type="ECO:0000255" key="1">
    <source>
        <dbReference type="HAMAP-Rule" id="MF_00003"/>
    </source>
</evidence>
<evidence type="ECO:0000256" key="2">
    <source>
        <dbReference type="SAM" id="MobiDB-lite"/>
    </source>
</evidence>